<protein>
    <recommendedName>
        <fullName evidence="1">Ferrochelatase</fullName>
        <ecNumber evidence="1">4.98.1.1</ecNumber>
    </recommendedName>
    <alternativeName>
        <fullName evidence="1">Heme synthase</fullName>
    </alternativeName>
    <alternativeName>
        <fullName evidence="1">Protoheme ferro-lyase</fullName>
    </alternativeName>
</protein>
<sequence length="331" mass="37804">MRRGLLLLNLGTPNNADIRAVKLYLREFLTDKRVIDLPTIPRYILVYCLILPFRSPKSAQAYQSIWTEKGSPLLYHSQNLVTKLQSALKDEYKIALGMRYGTPSITTALAELKDCHSLTILPLFPQYSSAATGSAIEKTLSHLANQEIIPSIKIIRDFYQRPEYIQAQAKIMKPYIKDNFHLLFSYHGIPERHIHKSGCDTLCPQTCTPIYDKNQACYRAQCYQTSLLLAKELQLGTHQYTTAFQSRLGKTPWIKPYTDEIFAELISKGIKNIVVSCPSFVADCLETLEEIGIRAKEQWEKLGGEQFILTPCMNDHPEWIKAIQSIVNEQF</sequence>
<feature type="chain" id="PRO_0000175155" description="Ferrochelatase">
    <location>
        <begin position="1"/>
        <end position="331"/>
    </location>
</feature>
<feature type="binding site" evidence="1">
    <location>
        <position position="187"/>
    </location>
    <ligand>
        <name>Fe cation</name>
        <dbReference type="ChEBI" id="CHEBI:24875"/>
    </ligand>
</feature>
<feature type="binding site" evidence="1">
    <location>
        <position position="286"/>
    </location>
    <ligand>
        <name>Fe cation</name>
        <dbReference type="ChEBI" id="CHEBI:24875"/>
    </ligand>
</feature>
<accession>Q5ZYE7</accession>
<name>HEMH_LEGPH</name>
<proteinExistence type="inferred from homology"/>
<gene>
    <name evidence="1" type="primary">hemH</name>
    <name type="ordered locus">lpg0425</name>
</gene>
<dbReference type="EC" id="4.98.1.1" evidence="1"/>
<dbReference type="EMBL" id="AE017354">
    <property type="protein sequence ID" value="AAU26522.1"/>
    <property type="status" value="ALT_INIT"/>
    <property type="molecule type" value="Genomic_DNA"/>
</dbReference>
<dbReference type="RefSeq" id="WP_015444837.1">
    <property type="nucleotide sequence ID" value="NC_002942.5"/>
</dbReference>
<dbReference type="RefSeq" id="YP_094469.1">
    <property type="nucleotide sequence ID" value="NC_002942.5"/>
</dbReference>
<dbReference type="SMR" id="Q5ZYE7"/>
<dbReference type="STRING" id="272624.lpg0425"/>
<dbReference type="PaxDb" id="272624-lpg0425"/>
<dbReference type="DNASU" id="3080526"/>
<dbReference type="GeneID" id="57034429"/>
<dbReference type="KEGG" id="lpn:lpg0425"/>
<dbReference type="PATRIC" id="fig|272624.6.peg.441"/>
<dbReference type="eggNOG" id="COG0276">
    <property type="taxonomic scope" value="Bacteria"/>
</dbReference>
<dbReference type="HOGENOM" id="CLU_018884_0_1_6"/>
<dbReference type="OrthoDB" id="9809741at2"/>
<dbReference type="UniPathway" id="UPA00252">
    <property type="reaction ID" value="UER00325"/>
</dbReference>
<dbReference type="Proteomes" id="UP000000609">
    <property type="component" value="Chromosome"/>
</dbReference>
<dbReference type="GO" id="GO:0005737">
    <property type="term" value="C:cytoplasm"/>
    <property type="evidence" value="ECO:0007669"/>
    <property type="project" value="UniProtKB-SubCell"/>
</dbReference>
<dbReference type="GO" id="GO:0004325">
    <property type="term" value="F:ferrochelatase activity"/>
    <property type="evidence" value="ECO:0007669"/>
    <property type="project" value="UniProtKB-UniRule"/>
</dbReference>
<dbReference type="GO" id="GO:0046872">
    <property type="term" value="F:metal ion binding"/>
    <property type="evidence" value="ECO:0007669"/>
    <property type="project" value="UniProtKB-KW"/>
</dbReference>
<dbReference type="GO" id="GO:0006783">
    <property type="term" value="P:heme biosynthetic process"/>
    <property type="evidence" value="ECO:0007669"/>
    <property type="project" value="UniProtKB-UniRule"/>
</dbReference>
<dbReference type="CDD" id="cd00419">
    <property type="entry name" value="Ferrochelatase_C"/>
    <property type="match status" value="1"/>
</dbReference>
<dbReference type="CDD" id="cd03411">
    <property type="entry name" value="Ferrochelatase_N"/>
    <property type="match status" value="1"/>
</dbReference>
<dbReference type="Gene3D" id="3.40.50.1400">
    <property type="match status" value="2"/>
</dbReference>
<dbReference type="HAMAP" id="MF_00323">
    <property type="entry name" value="Ferrochelatase"/>
    <property type="match status" value="1"/>
</dbReference>
<dbReference type="InterPro" id="IPR001015">
    <property type="entry name" value="Ferrochelatase"/>
</dbReference>
<dbReference type="InterPro" id="IPR033644">
    <property type="entry name" value="Ferrochelatase_C"/>
</dbReference>
<dbReference type="InterPro" id="IPR033659">
    <property type="entry name" value="Ferrochelatase_N"/>
</dbReference>
<dbReference type="NCBIfam" id="TIGR00109">
    <property type="entry name" value="hemH"/>
    <property type="match status" value="1"/>
</dbReference>
<dbReference type="PANTHER" id="PTHR11108">
    <property type="entry name" value="FERROCHELATASE"/>
    <property type="match status" value="1"/>
</dbReference>
<dbReference type="PANTHER" id="PTHR11108:SF1">
    <property type="entry name" value="FERROCHELATASE, MITOCHONDRIAL"/>
    <property type="match status" value="1"/>
</dbReference>
<dbReference type="Pfam" id="PF00762">
    <property type="entry name" value="Ferrochelatase"/>
    <property type="match status" value="1"/>
</dbReference>
<dbReference type="SUPFAM" id="SSF53800">
    <property type="entry name" value="Chelatase"/>
    <property type="match status" value="1"/>
</dbReference>
<organism>
    <name type="scientific">Legionella pneumophila subsp. pneumophila (strain Philadelphia 1 / ATCC 33152 / DSM 7513)</name>
    <dbReference type="NCBI Taxonomy" id="272624"/>
    <lineage>
        <taxon>Bacteria</taxon>
        <taxon>Pseudomonadati</taxon>
        <taxon>Pseudomonadota</taxon>
        <taxon>Gammaproteobacteria</taxon>
        <taxon>Legionellales</taxon>
        <taxon>Legionellaceae</taxon>
        <taxon>Legionella</taxon>
    </lineage>
</organism>
<keyword id="KW-0963">Cytoplasm</keyword>
<keyword id="KW-0350">Heme biosynthesis</keyword>
<keyword id="KW-0408">Iron</keyword>
<keyword id="KW-0456">Lyase</keyword>
<keyword id="KW-0479">Metal-binding</keyword>
<keyword id="KW-0627">Porphyrin biosynthesis</keyword>
<keyword id="KW-1185">Reference proteome</keyword>
<reference key="1">
    <citation type="journal article" date="2004" name="Science">
        <title>The genomic sequence of the accidental pathogen Legionella pneumophila.</title>
        <authorList>
            <person name="Chien M."/>
            <person name="Morozova I."/>
            <person name="Shi S."/>
            <person name="Sheng H."/>
            <person name="Chen J."/>
            <person name="Gomez S.M."/>
            <person name="Asamani G."/>
            <person name="Hill K."/>
            <person name="Nuara J."/>
            <person name="Feder M."/>
            <person name="Rineer J."/>
            <person name="Greenberg J.J."/>
            <person name="Steshenko V."/>
            <person name="Park S.H."/>
            <person name="Zhao B."/>
            <person name="Teplitskaya E."/>
            <person name="Edwards J.R."/>
            <person name="Pampou S."/>
            <person name="Georghiou A."/>
            <person name="Chou I.-C."/>
            <person name="Iannuccilli W."/>
            <person name="Ulz M.E."/>
            <person name="Kim D.H."/>
            <person name="Geringer-Sameth A."/>
            <person name="Goldsberry C."/>
            <person name="Morozov P."/>
            <person name="Fischer S.G."/>
            <person name="Segal G."/>
            <person name="Qu X."/>
            <person name="Rzhetsky A."/>
            <person name="Zhang P."/>
            <person name="Cayanis E."/>
            <person name="De Jong P.J."/>
            <person name="Ju J."/>
            <person name="Kalachikov S."/>
            <person name="Shuman H.A."/>
            <person name="Russo J.J."/>
        </authorList>
    </citation>
    <scope>NUCLEOTIDE SEQUENCE [LARGE SCALE GENOMIC DNA]</scope>
    <source>
        <strain>Philadelphia 1 / ATCC 33152 / DSM 7513</strain>
    </source>
</reference>
<comment type="function">
    <text evidence="1">Catalyzes the ferrous insertion into protoporphyrin IX.</text>
</comment>
<comment type="catalytic activity">
    <reaction evidence="1">
        <text>heme b + 2 H(+) = protoporphyrin IX + Fe(2+)</text>
        <dbReference type="Rhea" id="RHEA:22584"/>
        <dbReference type="ChEBI" id="CHEBI:15378"/>
        <dbReference type="ChEBI" id="CHEBI:29033"/>
        <dbReference type="ChEBI" id="CHEBI:57306"/>
        <dbReference type="ChEBI" id="CHEBI:60344"/>
        <dbReference type="EC" id="4.98.1.1"/>
    </reaction>
</comment>
<comment type="pathway">
    <text evidence="1">Porphyrin-containing compound metabolism; protoheme biosynthesis; protoheme from protoporphyrin-IX: step 1/1.</text>
</comment>
<comment type="subcellular location">
    <subcellularLocation>
        <location evidence="1">Cytoplasm</location>
    </subcellularLocation>
</comment>
<comment type="similarity">
    <text evidence="1">Belongs to the ferrochelatase family.</text>
</comment>
<comment type="sequence caution" evidence="2">
    <conflict type="erroneous initiation">
        <sequence resource="EMBL-CDS" id="AAU26522"/>
    </conflict>
</comment>
<evidence type="ECO:0000255" key="1">
    <source>
        <dbReference type="HAMAP-Rule" id="MF_00323"/>
    </source>
</evidence>
<evidence type="ECO:0000305" key="2"/>